<gene>
    <name evidence="1" type="primary">secA</name>
    <name type="ordered locus">MGAS2096_Spy1561</name>
</gene>
<feature type="chain" id="PRO_0000318447" description="Protein translocase subunit SecA">
    <location>
        <begin position="1"/>
        <end position="839"/>
    </location>
</feature>
<feature type="region of interest" description="Disordered" evidence="2">
    <location>
        <begin position="780"/>
        <end position="839"/>
    </location>
</feature>
<feature type="compositionally biased region" description="Basic and acidic residues" evidence="2">
    <location>
        <begin position="780"/>
        <end position="790"/>
    </location>
</feature>
<feature type="compositionally biased region" description="Polar residues" evidence="2">
    <location>
        <begin position="791"/>
        <end position="809"/>
    </location>
</feature>
<feature type="compositionally biased region" description="Basic residues" evidence="2">
    <location>
        <begin position="827"/>
        <end position="839"/>
    </location>
</feature>
<feature type="binding site" evidence="1">
    <location>
        <position position="85"/>
    </location>
    <ligand>
        <name>ATP</name>
        <dbReference type="ChEBI" id="CHEBI:30616"/>
    </ligand>
</feature>
<feature type="binding site" evidence="1">
    <location>
        <begin position="103"/>
        <end position="107"/>
    </location>
    <ligand>
        <name>ATP</name>
        <dbReference type="ChEBI" id="CHEBI:30616"/>
    </ligand>
</feature>
<feature type="binding site" evidence="1">
    <location>
        <position position="493"/>
    </location>
    <ligand>
        <name>ATP</name>
        <dbReference type="ChEBI" id="CHEBI:30616"/>
    </ligand>
</feature>
<feature type="binding site" evidence="1">
    <location>
        <position position="821"/>
    </location>
    <ligand>
        <name>Zn(2+)</name>
        <dbReference type="ChEBI" id="CHEBI:29105"/>
    </ligand>
</feature>
<feature type="binding site" evidence="1">
    <location>
        <position position="823"/>
    </location>
    <ligand>
        <name>Zn(2+)</name>
        <dbReference type="ChEBI" id="CHEBI:29105"/>
    </ligand>
</feature>
<feature type="binding site" evidence="1">
    <location>
        <position position="832"/>
    </location>
    <ligand>
        <name>Zn(2+)</name>
        <dbReference type="ChEBI" id="CHEBI:29105"/>
    </ligand>
</feature>
<feature type="binding site" evidence="1">
    <location>
        <position position="833"/>
    </location>
    <ligand>
        <name>Zn(2+)</name>
        <dbReference type="ChEBI" id="CHEBI:29105"/>
    </ligand>
</feature>
<sequence length="839" mass="94705">MANILRKVIENDKGELRKLEKIAKKVESYADQMASLSDRDLQGKTLEFKERYQKGETLEQLLPEAFAVVREAAKRVLGLFPYRVQIMGGIVLHNGDVPEMRTGEGKTLTATMPVYLNAIAGEGVHVITVNEYLSTRDATEMGEVYSWLGLSVGINLAAKSPAEKREAYNCDITYSTNSEVGFDYLRDNMVVRQEDMVQRPLNFALVDEVDSVLIDEARTPLIVSGAVSSETNQLYIRADMFVKTLTSVDYVIDVPTKTIGLSDSGIDKAESYFNLSNLYDIENVALTHFIDNALRANYIMLLDIDYVVSEDGEILIVDQFTGRTMEGRRFSDGLHQAIEAKEGVRIQEESKTSASITYQNMFRMYKKLAGMTGTAKTEEEEFREVYNMRIIPIPTNRPIARIDHTDLLYPTLESKFRAVVEDVKTRHAKGQPILVGTVAVETSDLISRKLVEAGIPHEVLNAKNHFKEAQIIMNAGQRGAVTIATNMAGRGTDIKLGEGVRELGGLCVIGTERHESRRIDNQLRGRSGRQGDPGESQFYLSLEDDLMRRFGSDRIKAFLDRMKLDEEDTVIKSGMLGRQVESAQKRVEGNNYDTRKQVLQYDDVMREQREIIYANRRDVITANRDLGPEIKAMIKRTIDRAVDAHARSNRKDAIDAIVTFARTSLVPEESISAKELRGLKDDQIKEKLYQRALAIYDQQLSKLRDQEAIIEFQKVLILMIVDNKWTEHIDALDQLRNAVGLRGYAQNNPVVEYQAEGFKMFQDMIGAIEFDVTRTMMKAQIHEQERERASQRATTAAPQNIQSQQSANTDDLPKVERNEACPCGSGKKFKNCHGRKSFS</sequence>
<dbReference type="EC" id="7.4.2.8" evidence="1"/>
<dbReference type="EMBL" id="CP000261">
    <property type="protein sequence ID" value="ABF36613.1"/>
    <property type="molecule type" value="Genomic_DNA"/>
</dbReference>
<dbReference type="SMR" id="Q1JA48"/>
<dbReference type="KEGG" id="spj:MGAS2096_Spy1561"/>
<dbReference type="HOGENOM" id="CLU_005314_3_0_9"/>
<dbReference type="GO" id="GO:0031522">
    <property type="term" value="C:cell envelope Sec protein transport complex"/>
    <property type="evidence" value="ECO:0007669"/>
    <property type="project" value="TreeGrafter"/>
</dbReference>
<dbReference type="GO" id="GO:0005829">
    <property type="term" value="C:cytosol"/>
    <property type="evidence" value="ECO:0007669"/>
    <property type="project" value="TreeGrafter"/>
</dbReference>
<dbReference type="GO" id="GO:0005886">
    <property type="term" value="C:plasma membrane"/>
    <property type="evidence" value="ECO:0007669"/>
    <property type="project" value="UniProtKB-SubCell"/>
</dbReference>
<dbReference type="GO" id="GO:0005524">
    <property type="term" value="F:ATP binding"/>
    <property type="evidence" value="ECO:0007669"/>
    <property type="project" value="UniProtKB-UniRule"/>
</dbReference>
<dbReference type="GO" id="GO:0046872">
    <property type="term" value="F:metal ion binding"/>
    <property type="evidence" value="ECO:0007669"/>
    <property type="project" value="UniProtKB-KW"/>
</dbReference>
<dbReference type="GO" id="GO:0008564">
    <property type="term" value="F:protein-exporting ATPase activity"/>
    <property type="evidence" value="ECO:0007669"/>
    <property type="project" value="UniProtKB-EC"/>
</dbReference>
<dbReference type="GO" id="GO:0065002">
    <property type="term" value="P:intracellular protein transmembrane transport"/>
    <property type="evidence" value="ECO:0007669"/>
    <property type="project" value="UniProtKB-UniRule"/>
</dbReference>
<dbReference type="GO" id="GO:0017038">
    <property type="term" value="P:protein import"/>
    <property type="evidence" value="ECO:0007669"/>
    <property type="project" value="InterPro"/>
</dbReference>
<dbReference type="GO" id="GO:0006605">
    <property type="term" value="P:protein targeting"/>
    <property type="evidence" value="ECO:0007669"/>
    <property type="project" value="UniProtKB-UniRule"/>
</dbReference>
<dbReference type="GO" id="GO:0043952">
    <property type="term" value="P:protein transport by the Sec complex"/>
    <property type="evidence" value="ECO:0007669"/>
    <property type="project" value="TreeGrafter"/>
</dbReference>
<dbReference type="CDD" id="cd17928">
    <property type="entry name" value="DEXDc_SecA"/>
    <property type="match status" value="1"/>
</dbReference>
<dbReference type="CDD" id="cd18803">
    <property type="entry name" value="SF2_C_secA"/>
    <property type="match status" value="1"/>
</dbReference>
<dbReference type="FunFam" id="1.10.3060.10:FF:000002">
    <property type="entry name" value="Preprotein translocase subunit SecA"/>
    <property type="match status" value="1"/>
</dbReference>
<dbReference type="FunFam" id="3.40.50.300:FF:000429">
    <property type="entry name" value="Preprotein translocase subunit SecA"/>
    <property type="match status" value="1"/>
</dbReference>
<dbReference type="FunFam" id="3.90.1440.10:FF:000001">
    <property type="entry name" value="Preprotein translocase subunit SecA"/>
    <property type="match status" value="1"/>
</dbReference>
<dbReference type="Gene3D" id="1.10.3060.10">
    <property type="entry name" value="Helical scaffold and wing domains of SecA"/>
    <property type="match status" value="1"/>
</dbReference>
<dbReference type="Gene3D" id="3.40.50.300">
    <property type="entry name" value="P-loop containing nucleotide triphosphate hydrolases"/>
    <property type="match status" value="3"/>
</dbReference>
<dbReference type="Gene3D" id="3.90.1440.10">
    <property type="entry name" value="SecA, preprotein cross-linking domain"/>
    <property type="match status" value="1"/>
</dbReference>
<dbReference type="HAMAP" id="MF_01382">
    <property type="entry name" value="SecA"/>
    <property type="match status" value="1"/>
</dbReference>
<dbReference type="InterPro" id="IPR014001">
    <property type="entry name" value="Helicase_ATP-bd"/>
</dbReference>
<dbReference type="InterPro" id="IPR001650">
    <property type="entry name" value="Helicase_C-like"/>
</dbReference>
<dbReference type="InterPro" id="IPR027417">
    <property type="entry name" value="P-loop_NTPase"/>
</dbReference>
<dbReference type="InterPro" id="IPR004027">
    <property type="entry name" value="SEC_C_motif"/>
</dbReference>
<dbReference type="InterPro" id="IPR000185">
    <property type="entry name" value="SecA"/>
</dbReference>
<dbReference type="InterPro" id="IPR020937">
    <property type="entry name" value="SecA_CS"/>
</dbReference>
<dbReference type="InterPro" id="IPR011115">
    <property type="entry name" value="SecA_DEAD"/>
</dbReference>
<dbReference type="InterPro" id="IPR014018">
    <property type="entry name" value="SecA_motor_DEAD"/>
</dbReference>
<dbReference type="InterPro" id="IPR011130">
    <property type="entry name" value="SecA_preprotein_X-link_dom"/>
</dbReference>
<dbReference type="InterPro" id="IPR044722">
    <property type="entry name" value="SecA_SF2_C"/>
</dbReference>
<dbReference type="InterPro" id="IPR011116">
    <property type="entry name" value="SecA_Wing/Scaffold"/>
</dbReference>
<dbReference type="InterPro" id="IPR036266">
    <property type="entry name" value="SecA_Wing/Scaffold_sf"/>
</dbReference>
<dbReference type="InterPro" id="IPR036670">
    <property type="entry name" value="SecA_X-link_sf"/>
</dbReference>
<dbReference type="NCBIfam" id="NF006630">
    <property type="entry name" value="PRK09200.1"/>
    <property type="match status" value="1"/>
</dbReference>
<dbReference type="NCBIfam" id="TIGR00963">
    <property type="entry name" value="secA"/>
    <property type="match status" value="1"/>
</dbReference>
<dbReference type="PANTHER" id="PTHR30612:SF0">
    <property type="entry name" value="CHLOROPLAST PROTEIN-TRANSPORTING ATPASE"/>
    <property type="match status" value="1"/>
</dbReference>
<dbReference type="PANTHER" id="PTHR30612">
    <property type="entry name" value="SECA INNER MEMBRANE COMPONENT OF SEC PROTEIN SECRETION SYSTEM"/>
    <property type="match status" value="1"/>
</dbReference>
<dbReference type="Pfam" id="PF21090">
    <property type="entry name" value="P-loop_SecA"/>
    <property type="match status" value="2"/>
</dbReference>
<dbReference type="Pfam" id="PF02810">
    <property type="entry name" value="SEC-C"/>
    <property type="match status" value="1"/>
</dbReference>
<dbReference type="Pfam" id="PF07517">
    <property type="entry name" value="SecA_DEAD"/>
    <property type="match status" value="1"/>
</dbReference>
<dbReference type="Pfam" id="PF01043">
    <property type="entry name" value="SecA_PP_bind"/>
    <property type="match status" value="1"/>
</dbReference>
<dbReference type="Pfam" id="PF07516">
    <property type="entry name" value="SecA_SW"/>
    <property type="match status" value="1"/>
</dbReference>
<dbReference type="PRINTS" id="PR00906">
    <property type="entry name" value="SECA"/>
</dbReference>
<dbReference type="SMART" id="SM00957">
    <property type="entry name" value="SecA_DEAD"/>
    <property type="match status" value="1"/>
</dbReference>
<dbReference type="SMART" id="SM00958">
    <property type="entry name" value="SecA_PP_bind"/>
    <property type="match status" value="1"/>
</dbReference>
<dbReference type="SUPFAM" id="SSF81886">
    <property type="entry name" value="Helical scaffold and wing domains of SecA"/>
    <property type="match status" value="1"/>
</dbReference>
<dbReference type="SUPFAM" id="SSF52540">
    <property type="entry name" value="P-loop containing nucleoside triphosphate hydrolases"/>
    <property type="match status" value="2"/>
</dbReference>
<dbReference type="SUPFAM" id="SSF81767">
    <property type="entry name" value="Pre-protein crosslinking domain of SecA"/>
    <property type="match status" value="1"/>
</dbReference>
<dbReference type="PROSITE" id="PS01312">
    <property type="entry name" value="SECA"/>
    <property type="match status" value="1"/>
</dbReference>
<dbReference type="PROSITE" id="PS51196">
    <property type="entry name" value="SECA_MOTOR_DEAD"/>
    <property type="match status" value="1"/>
</dbReference>
<name>SECA_STRPB</name>
<proteinExistence type="inferred from homology"/>
<protein>
    <recommendedName>
        <fullName evidence="1">Protein translocase subunit SecA</fullName>
        <ecNumber evidence="1">7.4.2.8</ecNumber>
    </recommendedName>
</protein>
<organism>
    <name type="scientific">Streptococcus pyogenes serotype M12 (strain MGAS2096)</name>
    <dbReference type="NCBI Taxonomy" id="370553"/>
    <lineage>
        <taxon>Bacteria</taxon>
        <taxon>Bacillati</taxon>
        <taxon>Bacillota</taxon>
        <taxon>Bacilli</taxon>
        <taxon>Lactobacillales</taxon>
        <taxon>Streptococcaceae</taxon>
        <taxon>Streptococcus</taxon>
    </lineage>
</organism>
<reference key="1">
    <citation type="journal article" date="2006" name="Proc. Natl. Acad. Sci. U.S.A.">
        <title>Molecular genetic anatomy of inter- and intraserotype variation in the human bacterial pathogen group A Streptococcus.</title>
        <authorList>
            <person name="Beres S.B."/>
            <person name="Richter E.W."/>
            <person name="Nagiec M.J."/>
            <person name="Sumby P."/>
            <person name="Porcella S.F."/>
            <person name="DeLeo F.R."/>
            <person name="Musser J.M."/>
        </authorList>
    </citation>
    <scope>NUCLEOTIDE SEQUENCE [LARGE SCALE GENOMIC DNA]</scope>
    <source>
        <strain>MGAS2096</strain>
    </source>
</reference>
<comment type="function">
    <text evidence="1">Part of the Sec protein translocase complex. Interacts with the SecYEG preprotein conducting channel. Has a central role in coupling the hydrolysis of ATP to the transfer of proteins into and across the cell membrane, serving as an ATP-driven molecular motor driving the stepwise translocation of polypeptide chains across the membrane.</text>
</comment>
<comment type="catalytic activity">
    <reaction evidence="1">
        <text>ATP + H2O + cellular proteinSide 1 = ADP + phosphate + cellular proteinSide 2.</text>
        <dbReference type="EC" id="7.4.2.8"/>
    </reaction>
</comment>
<comment type="cofactor">
    <cofactor evidence="1">
        <name>Zn(2+)</name>
        <dbReference type="ChEBI" id="CHEBI:29105"/>
    </cofactor>
    <text evidence="1">May bind 1 zinc ion per subunit.</text>
</comment>
<comment type="subunit">
    <text evidence="1">Monomer and homodimer. Part of the essential Sec protein translocation apparatus which comprises SecA, SecYEG and auxiliary proteins SecDF. Other proteins may also be involved.</text>
</comment>
<comment type="subcellular location">
    <subcellularLocation>
        <location evidence="1">Cell membrane</location>
        <topology evidence="1">Peripheral membrane protein</topology>
        <orientation evidence="1">Cytoplasmic side</orientation>
    </subcellularLocation>
    <subcellularLocation>
        <location evidence="1">Cytoplasm</location>
    </subcellularLocation>
    <text evidence="1">Distribution is 50-50.</text>
</comment>
<comment type="similarity">
    <text evidence="1">Belongs to the SecA family.</text>
</comment>
<keyword id="KW-0067">ATP-binding</keyword>
<keyword id="KW-1003">Cell membrane</keyword>
<keyword id="KW-0963">Cytoplasm</keyword>
<keyword id="KW-0472">Membrane</keyword>
<keyword id="KW-0479">Metal-binding</keyword>
<keyword id="KW-0547">Nucleotide-binding</keyword>
<keyword id="KW-0653">Protein transport</keyword>
<keyword id="KW-1278">Translocase</keyword>
<keyword id="KW-0811">Translocation</keyword>
<keyword id="KW-0813">Transport</keyword>
<keyword id="KW-0862">Zinc</keyword>
<accession>Q1JA48</accession>
<evidence type="ECO:0000255" key="1">
    <source>
        <dbReference type="HAMAP-Rule" id="MF_01382"/>
    </source>
</evidence>
<evidence type="ECO:0000256" key="2">
    <source>
        <dbReference type="SAM" id="MobiDB-lite"/>
    </source>
</evidence>